<dbReference type="EMBL" id="AE005674">
    <property type="protein sequence ID" value="AAN42244.2"/>
    <property type="molecule type" value="Genomic_DNA"/>
</dbReference>
<dbReference type="EMBL" id="AE014073">
    <property type="protein sequence ID" value="AAP16115.1"/>
    <property type="molecule type" value="Genomic_DNA"/>
</dbReference>
<dbReference type="RefSeq" id="NP_706537.2">
    <property type="nucleotide sequence ID" value="NC_004337.2"/>
</dbReference>
<dbReference type="RefSeq" id="WP_000848387.1">
    <property type="nucleotide sequence ID" value="NZ_WPGW01000002.1"/>
</dbReference>
<dbReference type="SMR" id="P0AFZ0"/>
<dbReference type="STRING" id="198214.SF0606"/>
<dbReference type="PaxDb" id="198214-SF0606"/>
<dbReference type="GeneID" id="1023526"/>
<dbReference type="GeneID" id="93776797"/>
<dbReference type="KEGG" id="sfl:SF0606"/>
<dbReference type="KEGG" id="sfx:S0617"/>
<dbReference type="PATRIC" id="fig|198214.7.peg.707"/>
<dbReference type="HOGENOM" id="CLU_099733_0_0_6"/>
<dbReference type="Proteomes" id="UP000001006">
    <property type="component" value="Chromosome"/>
</dbReference>
<dbReference type="Proteomes" id="UP000002673">
    <property type="component" value="Chromosome"/>
</dbReference>
<dbReference type="GO" id="GO:0005737">
    <property type="term" value="C:cytoplasm"/>
    <property type="evidence" value="ECO:0007669"/>
    <property type="project" value="UniProtKB-SubCell"/>
</dbReference>
<dbReference type="GO" id="GO:0043565">
    <property type="term" value="F:sequence-specific DNA binding"/>
    <property type="evidence" value="ECO:0007669"/>
    <property type="project" value="UniProtKB-ARBA"/>
</dbReference>
<dbReference type="GO" id="GO:0032297">
    <property type="term" value="P:negative regulation of DNA-templated DNA replication initiation"/>
    <property type="evidence" value="ECO:0007669"/>
    <property type="project" value="UniProtKB-UniRule"/>
</dbReference>
<dbReference type="GO" id="GO:0006355">
    <property type="term" value="P:regulation of DNA-templated transcription"/>
    <property type="evidence" value="ECO:0007669"/>
    <property type="project" value="InterPro"/>
</dbReference>
<dbReference type="FunFam" id="1.10.1220.10:FF:000002">
    <property type="entry name" value="Negative modulator of initiation of replication"/>
    <property type="match status" value="1"/>
</dbReference>
<dbReference type="FunFam" id="1.20.1380.10:FF:000001">
    <property type="entry name" value="Negative modulator of initiation of replication"/>
    <property type="match status" value="1"/>
</dbReference>
<dbReference type="Gene3D" id="1.10.1220.10">
    <property type="entry name" value="Met repressor-like"/>
    <property type="match status" value="1"/>
</dbReference>
<dbReference type="Gene3D" id="1.20.1380.10">
    <property type="entry name" value="Replication modulator SeqA, C-terminal DNA-binding domain"/>
    <property type="match status" value="1"/>
</dbReference>
<dbReference type="HAMAP" id="MF_00908">
    <property type="entry name" value="SeqA"/>
    <property type="match status" value="1"/>
</dbReference>
<dbReference type="InterPro" id="IPR013321">
    <property type="entry name" value="Arc_rbn_hlx_hlx"/>
</dbReference>
<dbReference type="InterPro" id="IPR010985">
    <property type="entry name" value="Ribbon_hlx_hlx"/>
</dbReference>
<dbReference type="InterPro" id="IPR005621">
    <property type="entry name" value="SeqA"/>
</dbReference>
<dbReference type="InterPro" id="IPR026577">
    <property type="entry name" value="SeqA_DNA-bd_C"/>
</dbReference>
<dbReference type="InterPro" id="IPR036835">
    <property type="entry name" value="SeqA_DNA-bd_C_sf"/>
</dbReference>
<dbReference type="InterPro" id="IPR033761">
    <property type="entry name" value="SeqA_N"/>
</dbReference>
<dbReference type="NCBIfam" id="NF008389">
    <property type="entry name" value="PRK11187.1"/>
    <property type="match status" value="1"/>
</dbReference>
<dbReference type="Pfam" id="PF03925">
    <property type="entry name" value="SeqA"/>
    <property type="match status" value="1"/>
</dbReference>
<dbReference type="Pfam" id="PF17206">
    <property type="entry name" value="SeqA_N"/>
    <property type="match status" value="1"/>
</dbReference>
<dbReference type="PIRSF" id="PIRSF019401">
    <property type="entry name" value="SeqA"/>
    <property type="match status" value="1"/>
</dbReference>
<dbReference type="SUPFAM" id="SSF82808">
    <property type="entry name" value="Replication modulator SeqA, C-terminal DNA-binding domain"/>
    <property type="match status" value="1"/>
</dbReference>
<dbReference type="SUPFAM" id="SSF47598">
    <property type="entry name" value="Ribbon-helix-helix"/>
    <property type="match status" value="1"/>
</dbReference>
<accession>P0AFZ0</accession>
<accession>P36658</accession>
<feature type="chain" id="PRO_0000097686" description="Negative modulator of initiation of replication">
    <location>
        <begin position="1"/>
        <end position="181"/>
    </location>
</feature>
<feature type="region of interest" description="Interaction with DNA" evidence="1">
    <location>
        <begin position="87"/>
        <end position="88"/>
    </location>
</feature>
<feature type="region of interest" description="Interaction with DNA" evidence="1">
    <location>
        <begin position="116"/>
        <end position="120"/>
    </location>
</feature>
<feature type="region of interest" description="Interaction with DNA" evidence="1">
    <location>
        <begin position="150"/>
        <end position="156"/>
    </location>
</feature>
<gene>
    <name evidence="1" type="primary">seqA</name>
    <name type="ordered locus">SF0606</name>
    <name type="ordered locus">S0617</name>
</gene>
<comment type="function">
    <text evidence="1">Negative regulator of replication initiation, which contributes to regulation of DNA replication and ensures that replication initiation occurs exactly once per chromosome per cell cycle. Binds to pairs of hemimethylated GATC sequences in the oriC region, thus preventing assembly of replication proteins and re-initiation at newly replicated origins. Repression is relieved when the region becomes fully methylated.</text>
</comment>
<comment type="subunit">
    <text evidence="1">Homodimer. Polymerizes to form helical filaments.</text>
</comment>
<comment type="subcellular location">
    <subcellularLocation>
        <location evidence="1">Cytoplasm</location>
    </subcellularLocation>
</comment>
<comment type="similarity">
    <text evidence="1">Belongs to the SeqA family.</text>
</comment>
<protein>
    <recommendedName>
        <fullName evidence="1">Negative modulator of initiation of replication</fullName>
    </recommendedName>
</protein>
<keyword id="KW-0963">Cytoplasm</keyword>
<keyword id="KW-0236">DNA replication inhibitor</keyword>
<keyword id="KW-0238">DNA-binding</keyword>
<keyword id="KW-1185">Reference proteome</keyword>
<reference key="1">
    <citation type="journal article" date="2002" name="Nucleic Acids Res.">
        <title>Genome sequence of Shigella flexneri 2a: insights into pathogenicity through comparison with genomes of Escherichia coli K12 and O157.</title>
        <authorList>
            <person name="Jin Q."/>
            <person name="Yuan Z."/>
            <person name="Xu J."/>
            <person name="Wang Y."/>
            <person name="Shen Y."/>
            <person name="Lu W."/>
            <person name="Wang J."/>
            <person name="Liu H."/>
            <person name="Yang J."/>
            <person name="Yang F."/>
            <person name="Zhang X."/>
            <person name="Zhang J."/>
            <person name="Yang G."/>
            <person name="Wu H."/>
            <person name="Qu D."/>
            <person name="Dong J."/>
            <person name="Sun L."/>
            <person name="Xue Y."/>
            <person name="Zhao A."/>
            <person name="Gao Y."/>
            <person name="Zhu J."/>
            <person name="Kan B."/>
            <person name="Ding K."/>
            <person name="Chen S."/>
            <person name="Cheng H."/>
            <person name="Yao Z."/>
            <person name="He B."/>
            <person name="Chen R."/>
            <person name="Ma D."/>
            <person name="Qiang B."/>
            <person name="Wen Y."/>
            <person name="Hou Y."/>
            <person name="Yu J."/>
        </authorList>
    </citation>
    <scope>NUCLEOTIDE SEQUENCE [LARGE SCALE GENOMIC DNA]</scope>
    <source>
        <strain>301 / Serotype 2a</strain>
    </source>
</reference>
<reference key="2">
    <citation type="journal article" date="2003" name="Infect. Immun.">
        <title>Complete genome sequence and comparative genomics of Shigella flexneri serotype 2a strain 2457T.</title>
        <authorList>
            <person name="Wei J."/>
            <person name="Goldberg M.B."/>
            <person name="Burland V."/>
            <person name="Venkatesan M.M."/>
            <person name="Deng W."/>
            <person name="Fournier G."/>
            <person name="Mayhew G.F."/>
            <person name="Plunkett G. III"/>
            <person name="Rose D.J."/>
            <person name="Darling A."/>
            <person name="Mau B."/>
            <person name="Perna N.T."/>
            <person name="Payne S.M."/>
            <person name="Runyen-Janecky L.J."/>
            <person name="Zhou S."/>
            <person name="Schwartz D.C."/>
            <person name="Blattner F.R."/>
        </authorList>
    </citation>
    <scope>NUCLEOTIDE SEQUENCE [LARGE SCALE GENOMIC DNA]</scope>
    <source>
        <strain>ATCC 700930 / 2457T / Serotype 2a</strain>
    </source>
</reference>
<organism>
    <name type="scientific">Shigella flexneri</name>
    <dbReference type="NCBI Taxonomy" id="623"/>
    <lineage>
        <taxon>Bacteria</taxon>
        <taxon>Pseudomonadati</taxon>
        <taxon>Pseudomonadota</taxon>
        <taxon>Gammaproteobacteria</taxon>
        <taxon>Enterobacterales</taxon>
        <taxon>Enterobacteriaceae</taxon>
        <taxon>Shigella</taxon>
    </lineage>
</organism>
<evidence type="ECO:0000255" key="1">
    <source>
        <dbReference type="HAMAP-Rule" id="MF_00908"/>
    </source>
</evidence>
<sequence>MKTIEVDDELYSYIASHTKHIGESASDILRRMLKFSAASQPAAPVTKEVRVASPAIVEAKPVKTIKDKVRAMRELLLSDEYAEQKRAVNRFMLLLSTLYSLDAQAFAEATESLHGRTRVYFAADEQTLLKNGNQTKPKHVPGTPYWVITNTNTGRKCSMIEHIMQSMQFPAELIEKVCGTI</sequence>
<name>SEQA_SHIFL</name>
<proteinExistence type="inferred from homology"/>